<organism>
    <name type="scientific">Escherichia coli (strain ATCC 8739 / DSM 1576 / NBRC 3972 / NCIMB 8545 / WDCM 00012 / Crooks)</name>
    <dbReference type="NCBI Taxonomy" id="481805"/>
    <lineage>
        <taxon>Bacteria</taxon>
        <taxon>Pseudomonadati</taxon>
        <taxon>Pseudomonadota</taxon>
        <taxon>Gammaproteobacteria</taxon>
        <taxon>Enterobacterales</taxon>
        <taxon>Enterobacteriaceae</taxon>
        <taxon>Escherichia</taxon>
    </lineage>
</organism>
<gene>
    <name evidence="1" type="primary">plsB</name>
    <name type="ordered locus">EcolC_3987</name>
</gene>
<protein>
    <recommendedName>
        <fullName evidence="1">Glycerol-3-phosphate acyltransferase</fullName>
        <shortName evidence="1">GPAT</shortName>
        <ecNumber evidence="1">2.3.1.15</ecNumber>
    </recommendedName>
</protein>
<reference key="1">
    <citation type="submission" date="2008-02" db="EMBL/GenBank/DDBJ databases">
        <title>Complete sequence of Escherichia coli C str. ATCC 8739.</title>
        <authorList>
            <person name="Copeland A."/>
            <person name="Lucas S."/>
            <person name="Lapidus A."/>
            <person name="Glavina del Rio T."/>
            <person name="Dalin E."/>
            <person name="Tice H."/>
            <person name="Bruce D."/>
            <person name="Goodwin L."/>
            <person name="Pitluck S."/>
            <person name="Kiss H."/>
            <person name="Brettin T."/>
            <person name="Detter J.C."/>
            <person name="Han C."/>
            <person name="Kuske C.R."/>
            <person name="Schmutz J."/>
            <person name="Larimer F."/>
            <person name="Land M."/>
            <person name="Hauser L."/>
            <person name="Kyrpides N."/>
            <person name="Mikhailova N."/>
            <person name="Ingram L."/>
            <person name="Richardson P."/>
        </authorList>
    </citation>
    <scope>NUCLEOTIDE SEQUENCE [LARGE SCALE GENOMIC DNA]</scope>
    <source>
        <strain>ATCC 8739 / DSM 1576 / NBRC 3972 / NCIMB 8545 / WDCM 00012 / Crooks</strain>
    </source>
</reference>
<accession>B1IUL1</accession>
<comment type="catalytic activity">
    <reaction evidence="1">
        <text>sn-glycerol 3-phosphate + an acyl-CoA = a 1-acyl-sn-glycero-3-phosphate + CoA</text>
        <dbReference type="Rhea" id="RHEA:15325"/>
        <dbReference type="ChEBI" id="CHEBI:57287"/>
        <dbReference type="ChEBI" id="CHEBI:57597"/>
        <dbReference type="ChEBI" id="CHEBI:57970"/>
        <dbReference type="ChEBI" id="CHEBI:58342"/>
        <dbReference type="EC" id="2.3.1.15"/>
    </reaction>
</comment>
<comment type="pathway">
    <text evidence="1">Phospholipid metabolism; CDP-diacylglycerol biosynthesis; CDP-diacylglycerol from sn-glycerol 3-phosphate: step 1/3.</text>
</comment>
<comment type="subcellular location">
    <subcellularLocation>
        <location evidence="1">Cell inner membrane</location>
        <topology evidence="1">Peripheral membrane protein</topology>
        <orientation evidence="1">Cytoplasmic side</orientation>
    </subcellularLocation>
</comment>
<comment type="domain">
    <text evidence="1">The HXXXXD motif is essential for acyltransferase activity and may constitute the binding site for the phosphate moiety of the glycerol-3-phosphate.</text>
</comment>
<comment type="similarity">
    <text evidence="1">Belongs to the GPAT/DAPAT family.</text>
</comment>
<sequence length="807" mass="91381">MSGWPRIYYKLLNLPLSILVKSKSIPADPAPELGLDTSRPIMYVLPYNSKADLLTLRAQCLAHDLPDPLEPLEIDGTLLPRYVFIHGGPRVFTYYTPKEESIKLFHDYLDLHRSNPNLDVQMVPVSVMFGRAPGREKGEVNPPLRMLNGVQKFFAVLWLGRDSFVRFSPSVSLRRMADEHGTDKTIAQKLARVARMHFARQRLAAVGPRLPARQDLFNKLLASRAIAKAVEDEARSKKISHEKAQQNAIALMEEIAANFSYEMIRLTDRILGFTWNRLYQGINVHNAERVRQLAHDGHELVYVPCHRSHMDYLLLSYVLYHQGLVPPHIAAGINLNFWPAGPIFRRLGAFFIRRTFKGNKLYSTVFREYLGELFSRGYSVEYFVEGGRSRTGRLLDPKTGTLSMTIQAMLRGGTRPITLIPIYIGYEHVMEVGTYAKELRGATKEKESLPQMLRGLSKLRNLGQGYVNFGEPMPLMTYLNQHVPDWRESIDPIEAVRPAWLTPTVNNIAADLMVRINNAGAANAMNLCCTALLASRQRSLTREQLTEQLNCYLDLMRNVPYSTDSTVPSASASELIDHALQMNKFEVEKDTIGDIIILPREQAVLMTYYRNNIAHMLVLPSLMAAIVTQHRHISRDVLMEHVNVLYPMLKAELFLRWDRDELPDVIDALANEMQRQGLITLQDDELHINPAHSRTLQLLAAGARETLQRYAITFWLLSANPSINRGTLEKESRTVAQRLSVLHGINAPEFFDKAVFSSLVLTLRDEGYISDSGDAEPAETMKVYQLLAELITSDVRLTIESATQGEG</sequence>
<evidence type="ECO:0000255" key="1">
    <source>
        <dbReference type="HAMAP-Rule" id="MF_00393"/>
    </source>
</evidence>
<keyword id="KW-0012">Acyltransferase</keyword>
<keyword id="KW-0997">Cell inner membrane</keyword>
<keyword id="KW-1003">Cell membrane</keyword>
<keyword id="KW-0444">Lipid biosynthesis</keyword>
<keyword id="KW-0443">Lipid metabolism</keyword>
<keyword id="KW-0472">Membrane</keyword>
<keyword id="KW-0594">Phospholipid biosynthesis</keyword>
<keyword id="KW-1208">Phospholipid metabolism</keyword>
<keyword id="KW-0808">Transferase</keyword>
<dbReference type="EC" id="2.3.1.15" evidence="1"/>
<dbReference type="EMBL" id="CP000946">
    <property type="protein sequence ID" value="ACA79588.1"/>
    <property type="molecule type" value="Genomic_DNA"/>
</dbReference>
<dbReference type="RefSeq" id="WP_000017354.1">
    <property type="nucleotide sequence ID" value="NZ_MTFT01000033.1"/>
</dbReference>
<dbReference type="SMR" id="B1IUL1"/>
<dbReference type="GeneID" id="75204185"/>
<dbReference type="KEGG" id="ecl:EcolC_3987"/>
<dbReference type="HOGENOM" id="CLU_015407_0_0_6"/>
<dbReference type="UniPathway" id="UPA00557">
    <property type="reaction ID" value="UER00612"/>
</dbReference>
<dbReference type="GO" id="GO:0005886">
    <property type="term" value="C:plasma membrane"/>
    <property type="evidence" value="ECO:0007669"/>
    <property type="project" value="UniProtKB-SubCell"/>
</dbReference>
<dbReference type="GO" id="GO:0004366">
    <property type="term" value="F:glycerol-3-phosphate O-acyltransferase activity"/>
    <property type="evidence" value="ECO:0007669"/>
    <property type="project" value="UniProtKB-UniRule"/>
</dbReference>
<dbReference type="GO" id="GO:0016024">
    <property type="term" value="P:CDP-diacylglycerol biosynthetic process"/>
    <property type="evidence" value="ECO:0007669"/>
    <property type="project" value="UniProtKB-UniRule"/>
</dbReference>
<dbReference type="GO" id="GO:0006631">
    <property type="term" value="P:fatty acid metabolic process"/>
    <property type="evidence" value="ECO:0007669"/>
    <property type="project" value="TreeGrafter"/>
</dbReference>
<dbReference type="CDD" id="cd07993">
    <property type="entry name" value="LPLAT_DHAPAT-like"/>
    <property type="match status" value="1"/>
</dbReference>
<dbReference type="HAMAP" id="MF_00393">
    <property type="entry name" value="Glyc3P_acyltrans"/>
    <property type="match status" value="1"/>
</dbReference>
<dbReference type="InterPro" id="IPR022284">
    <property type="entry name" value="GPAT/DHAPAT"/>
</dbReference>
<dbReference type="InterPro" id="IPR045520">
    <property type="entry name" value="GPAT/DHAPAT_C"/>
</dbReference>
<dbReference type="InterPro" id="IPR041728">
    <property type="entry name" value="GPAT/DHAPAT_LPLAT"/>
</dbReference>
<dbReference type="InterPro" id="IPR028354">
    <property type="entry name" value="GPAT_PlsB"/>
</dbReference>
<dbReference type="InterPro" id="IPR002123">
    <property type="entry name" value="Plipid/glycerol_acylTrfase"/>
</dbReference>
<dbReference type="NCBIfam" id="TIGR03703">
    <property type="entry name" value="plsB"/>
    <property type="match status" value="1"/>
</dbReference>
<dbReference type="NCBIfam" id="NF003441">
    <property type="entry name" value="PRK04974.1"/>
    <property type="match status" value="1"/>
</dbReference>
<dbReference type="PANTHER" id="PTHR12563:SF17">
    <property type="entry name" value="DIHYDROXYACETONE PHOSPHATE ACYLTRANSFERASE"/>
    <property type="match status" value="1"/>
</dbReference>
<dbReference type="PANTHER" id="PTHR12563">
    <property type="entry name" value="GLYCEROL-3-PHOSPHATE ACYLTRANSFERASE"/>
    <property type="match status" value="1"/>
</dbReference>
<dbReference type="Pfam" id="PF01553">
    <property type="entry name" value="Acyltransferase"/>
    <property type="match status" value="1"/>
</dbReference>
<dbReference type="Pfam" id="PF19277">
    <property type="entry name" value="GPAT_C"/>
    <property type="match status" value="1"/>
</dbReference>
<dbReference type="PIRSF" id="PIRSF500064">
    <property type="entry name" value="GPAT"/>
    <property type="match status" value="1"/>
</dbReference>
<dbReference type="PIRSF" id="PIRSF000437">
    <property type="entry name" value="GPAT_DHAPAT"/>
    <property type="match status" value="1"/>
</dbReference>
<dbReference type="SMART" id="SM00563">
    <property type="entry name" value="PlsC"/>
    <property type="match status" value="1"/>
</dbReference>
<dbReference type="SUPFAM" id="SSF69593">
    <property type="entry name" value="Glycerol-3-phosphate (1)-acyltransferase"/>
    <property type="match status" value="1"/>
</dbReference>
<proteinExistence type="inferred from homology"/>
<name>PLSB_ECOLC</name>
<feature type="chain" id="PRO_1000080287" description="Glycerol-3-phosphate acyltransferase">
    <location>
        <begin position="1"/>
        <end position="807"/>
    </location>
</feature>
<feature type="short sequence motif" description="HXXXXD motif">
    <location>
        <begin position="305"/>
        <end position="310"/>
    </location>
</feature>